<comment type="function">
    <text>Has an important function as a repair enzyme for proteins that have been inactivated by oxidation. Catalyzes the reversible oxidation-reduction of methionine sulfoxide in proteins to methionine.</text>
</comment>
<comment type="catalytic activity">
    <reaction>
        <text>L-methionyl-[protein] + [thioredoxin]-disulfide + H2O = L-methionyl-(S)-S-oxide-[protein] + [thioredoxin]-dithiol</text>
        <dbReference type="Rhea" id="RHEA:14217"/>
        <dbReference type="Rhea" id="RHEA-COMP:10698"/>
        <dbReference type="Rhea" id="RHEA-COMP:10700"/>
        <dbReference type="Rhea" id="RHEA-COMP:12313"/>
        <dbReference type="Rhea" id="RHEA-COMP:12315"/>
        <dbReference type="ChEBI" id="CHEBI:15377"/>
        <dbReference type="ChEBI" id="CHEBI:16044"/>
        <dbReference type="ChEBI" id="CHEBI:29950"/>
        <dbReference type="ChEBI" id="CHEBI:44120"/>
        <dbReference type="ChEBI" id="CHEBI:50058"/>
        <dbReference type="EC" id="1.8.4.11"/>
    </reaction>
</comment>
<comment type="catalytic activity">
    <reaction>
        <text>[thioredoxin]-disulfide + L-methionine + H2O = L-methionine (S)-S-oxide + [thioredoxin]-dithiol</text>
        <dbReference type="Rhea" id="RHEA:19993"/>
        <dbReference type="Rhea" id="RHEA-COMP:10698"/>
        <dbReference type="Rhea" id="RHEA-COMP:10700"/>
        <dbReference type="ChEBI" id="CHEBI:15377"/>
        <dbReference type="ChEBI" id="CHEBI:29950"/>
        <dbReference type="ChEBI" id="CHEBI:50058"/>
        <dbReference type="ChEBI" id="CHEBI:57844"/>
        <dbReference type="ChEBI" id="CHEBI:58772"/>
        <dbReference type="EC" id="1.8.4.11"/>
    </reaction>
</comment>
<comment type="similarity">
    <text evidence="4">Belongs to the MsrA Met sulfoxide reductase family.</text>
</comment>
<reference key="1">
    <citation type="journal article" date="1994" name="Plant Mol. Biol.">
        <title>A seed-specific Brassica napus oleosin promoter interacts with a G-box-specific protein and may be bi-directional.</title>
        <authorList>
            <person name="Keddie J.S."/>
            <person name="Tsiantis M."/>
            <person name="Piffanelli P."/>
            <person name="Cella R."/>
            <person name="Hatzopoulos P."/>
            <person name="Murphy D.J."/>
        </authorList>
    </citation>
    <scope>NUCLEOTIDE SEQUENCE</scope>
    <source>
        <strain>cv. Jet neuf</strain>
    </source>
</reference>
<reference key="2">
    <citation type="journal article" date="1996" name="Plant J.">
        <title>Identification of a peptide methionine sulphoxide reductase gene in an oleosin promoter from Brassica napus.</title>
        <authorList>
            <person name="Sadanandom A.C."/>
            <person name="Piffanelli P."/>
            <person name="Knott T."/>
            <person name="Robinson C."/>
            <person name="Sharpe A."/>
            <person name="Lydiate D."/>
            <person name="Murphy D.J."/>
            <person name="Fairbairn D.J."/>
        </authorList>
    </citation>
    <scope>NUCLEOTIDE SEQUENCE [MRNA]</scope>
    <scope>VARIANTS LEU-4; ALA-14; SER-24; ALA-75 AND SER-129</scope>
    <source>
        <tissue>Leaf</tissue>
    </source>
</reference>
<sequence length="257" mass="28466">MLSIVASPPVISAVSLSKPLQSLAKAALSLSKRAKPTSPFPKTARSISVYKSPMNNLFTRLGFGSRPQPDPAASSAIAQGPDDDVPSPGQQFAQFGAGCFWGAELAYQRVPGVTKTEVGYSHGFVDNPTYEDVCSETTGHNEIVRVQYDPKEVSFESLLDVFWKRHDPTTLNRQGNDVGTRYRSGIYFYTDEQEKLAREAMEKQQKILNRKIVTEILPATKFYRAENYHQQYLAKGGRMGLSQSAEKGCNDPIRCYG</sequence>
<protein>
    <recommendedName>
        <fullName>Peptide methionine sulfoxide reductase</fullName>
        <ecNumber>1.8.4.11</ecNumber>
    </recommendedName>
    <alternativeName>
        <fullName>Peptide-methionine (S)-S-oxide reductase</fullName>
        <shortName>Peptide Met(O) reductase</shortName>
    </alternativeName>
    <alternativeName>
        <fullName>Protein-methionine-S-oxide reductase</fullName>
    </alternativeName>
</protein>
<keyword id="KW-0560">Oxidoreductase</keyword>
<keyword id="KW-0597">Phosphoprotein</keyword>
<evidence type="ECO:0000250" key="1">
    <source>
        <dbReference type="UniProtKB" id="Q9LY15"/>
    </source>
</evidence>
<evidence type="ECO:0000256" key="2">
    <source>
        <dbReference type="SAM" id="MobiDB-lite"/>
    </source>
</evidence>
<evidence type="ECO:0000269" key="3">
    <source>
    </source>
</evidence>
<evidence type="ECO:0000305" key="4"/>
<name>MSRA_BRANA</name>
<organism>
    <name type="scientific">Brassica napus</name>
    <name type="common">Rape</name>
    <dbReference type="NCBI Taxonomy" id="3708"/>
    <lineage>
        <taxon>Eukaryota</taxon>
        <taxon>Viridiplantae</taxon>
        <taxon>Streptophyta</taxon>
        <taxon>Embryophyta</taxon>
        <taxon>Tracheophyta</taxon>
        <taxon>Spermatophyta</taxon>
        <taxon>Magnoliopsida</taxon>
        <taxon>eudicotyledons</taxon>
        <taxon>Gunneridae</taxon>
        <taxon>Pentapetalae</taxon>
        <taxon>rosids</taxon>
        <taxon>malvids</taxon>
        <taxon>Brassicales</taxon>
        <taxon>Brassicaceae</taxon>
        <taxon>Brassiceae</taxon>
        <taxon>Brassica</taxon>
    </lineage>
</organism>
<accession>P54151</accession>
<feature type="chain" id="PRO_0000138633" description="Peptide methionine sulfoxide reductase">
    <location>
        <begin position="1"/>
        <end position="257"/>
    </location>
</feature>
<feature type="region of interest" description="Disordered" evidence="2">
    <location>
        <begin position="61"/>
        <end position="88"/>
    </location>
</feature>
<feature type="modified residue" description="Phosphoserine" evidence="1">
    <location>
        <position position="244"/>
    </location>
</feature>
<feature type="sequence variant" evidence="3">
    <original>I</original>
    <variation>L</variation>
    <location>
        <position position="4"/>
    </location>
</feature>
<feature type="sequence variant" evidence="3">
    <original>V</original>
    <variation>A</variation>
    <location>
        <position position="14"/>
    </location>
</feature>
<feature type="sequence variant" evidence="3">
    <original>A</original>
    <variation>S</variation>
    <location>
        <position position="24"/>
    </location>
</feature>
<feature type="sequence variant" evidence="3">
    <original>S</original>
    <variation>A</variation>
    <location>
        <position position="75"/>
    </location>
</feature>
<feature type="sequence variant" evidence="3">
    <original>T</original>
    <variation>S</variation>
    <location>
        <position position="129"/>
    </location>
</feature>
<gene>
    <name type="primary">PMSR</name>
</gene>
<proteinExistence type="evidence at transcript level"/>
<dbReference type="EC" id="1.8.4.11"/>
<dbReference type="EMBL" id="X94225">
    <property type="protein sequence ID" value="CAA63919.1"/>
    <property type="molecule type" value="Genomic_DNA"/>
</dbReference>
<dbReference type="EMBL" id="Z48619">
    <property type="protein sequence ID" value="CAA88538.1"/>
    <property type="molecule type" value="mRNA"/>
</dbReference>
<dbReference type="EMBL" id="X91486">
    <property type="protein sequence ID" value="CAA62760.1"/>
    <property type="molecule type" value="mRNA"/>
</dbReference>
<dbReference type="PIR" id="S55365">
    <property type="entry name" value="S55365"/>
</dbReference>
<dbReference type="PIR" id="T47215">
    <property type="entry name" value="T47215"/>
</dbReference>
<dbReference type="RefSeq" id="NP_001302774.1">
    <property type="nucleotide sequence ID" value="NM_001315845.1"/>
</dbReference>
<dbReference type="RefSeq" id="NP_001302784.1">
    <property type="nucleotide sequence ID" value="NM_001315855.1"/>
</dbReference>
<dbReference type="SMR" id="P54151"/>
<dbReference type="GeneID" id="106346565"/>
<dbReference type="GeneID" id="106442570"/>
<dbReference type="KEGG" id="bna:106346565"/>
<dbReference type="KEGG" id="bna:106442570"/>
<dbReference type="OrthoDB" id="77405at2759"/>
<dbReference type="GO" id="GO:0033744">
    <property type="term" value="F:L-methionine:thioredoxin-disulfide S-oxidoreductase activity"/>
    <property type="evidence" value="ECO:0007669"/>
    <property type="project" value="RHEA"/>
</dbReference>
<dbReference type="GO" id="GO:0008113">
    <property type="term" value="F:peptide-methionine (S)-S-oxide reductase activity"/>
    <property type="evidence" value="ECO:0007669"/>
    <property type="project" value="UniProtKB-EC"/>
</dbReference>
<dbReference type="FunFam" id="3.30.1060.10:FF:000002">
    <property type="entry name" value="Peptide methionine sulfoxide reductase"/>
    <property type="match status" value="1"/>
</dbReference>
<dbReference type="Gene3D" id="3.30.1060.10">
    <property type="entry name" value="Peptide methionine sulphoxide reductase MsrA"/>
    <property type="match status" value="1"/>
</dbReference>
<dbReference type="HAMAP" id="MF_01401">
    <property type="entry name" value="MsrA"/>
    <property type="match status" value="1"/>
</dbReference>
<dbReference type="InterPro" id="IPR002569">
    <property type="entry name" value="Met_Sox_Rdtase_MsrA_dom"/>
</dbReference>
<dbReference type="InterPro" id="IPR036509">
    <property type="entry name" value="Met_Sox_Rdtase_MsrA_sf"/>
</dbReference>
<dbReference type="InterPro" id="IPR050162">
    <property type="entry name" value="MsrA_MetSO_reductase"/>
</dbReference>
<dbReference type="NCBIfam" id="TIGR00401">
    <property type="entry name" value="msrA"/>
    <property type="match status" value="1"/>
</dbReference>
<dbReference type="PANTHER" id="PTHR42799">
    <property type="entry name" value="MITOCHONDRIAL PEPTIDE METHIONINE SULFOXIDE REDUCTASE"/>
    <property type="match status" value="1"/>
</dbReference>
<dbReference type="PANTHER" id="PTHR42799:SF2">
    <property type="entry name" value="MITOCHONDRIAL PEPTIDE METHIONINE SULFOXIDE REDUCTASE"/>
    <property type="match status" value="1"/>
</dbReference>
<dbReference type="Pfam" id="PF01625">
    <property type="entry name" value="PMSR"/>
    <property type="match status" value="1"/>
</dbReference>
<dbReference type="SUPFAM" id="SSF55068">
    <property type="entry name" value="Peptide methionine sulfoxide reductase"/>
    <property type="match status" value="1"/>
</dbReference>